<evidence type="ECO:0000255" key="1">
    <source>
        <dbReference type="HAMAP-Rule" id="MF_01954"/>
    </source>
</evidence>
<comment type="catalytic activity">
    <reaction evidence="1">
        <text>urea + 2 H2O + H(+) = hydrogencarbonate + 2 NH4(+)</text>
        <dbReference type="Rhea" id="RHEA:20557"/>
        <dbReference type="ChEBI" id="CHEBI:15377"/>
        <dbReference type="ChEBI" id="CHEBI:15378"/>
        <dbReference type="ChEBI" id="CHEBI:16199"/>
        <dbReference type="ChEBI" id="CHEBI:17544"/>
        <dbReference type="ChEBI" id="CHEBI:28938"/>
        <dbReference type="EC" id="3.5.1.5"/>
    </reaction>
</comment>
<comment type="pathway">
    <text evidence="1">Nitrogen metabolism; urea degradation; CO(2) and NH(3) from urea (urease route): step 1/1.</text>
</comment>
<comment type="subunit">
    <text evidence="1">Heterotrimer of UreA (gamma), UreB (beta) and UreC (alpha) subunits. Three heterotrimers associate to form the active enzyme.</text>
</comment>
<comment type="subcellular location">
    <subcellularLocation>
        <location evidence="1">Cytoplasm</location>
    </subcellularLocation>
</comment>
<comment type="similarity">
    <text evidence="1">Belongs to the urease beta subunit family.</text>
</comment>
<sequence length="101" mass="11161">MIPGEYQLAEGDILANVGRKTVKIEVTNSGDRPIQVGSHYHFFETNNALKFDRTLARGMRLNVPSGNAVRFEPGEVKSVELVAFGGNQIIYGFHNQIDGKL</sequence>
<name>URE2_HAEIE</name>
<organism>
    <name type="scientific">Haemophilus influenzae (strain PittEE)</name>
    <dbReference type="NCBI Taxonomy" id="374930"/>
    <lineage>
        <taxon>Bacteria</taxon>
        <taxon>Pseudomonadati</taxon>
        <taxon>Pseudomonadota</taxon>
        <taxon>Gammaproteobacteria</taxon>
        <taxon>Pasteurellales</taxon>
        <taxon>Pasteurellaceae</taxon>
        <taxon>Haemophilus</taxon>
    </lineage>
</organism>
<keyword id="KW-0963">Cytoplasm</keyword>
<keyword id="KW-0378">Hydrolase</keyword>
<protein>
    <recommendedName>
        <fullName evidence="1">Urease subunit beta</fullName>
        <ecNumber evidence="1">3.5.1.5</ecNumber>
    </recommendedName>
    <alternativeName>
        <fullName evidence="1">Urea amidohydrolase subunit beta</fullName>
    </alternativeName>
</protein>
<feature type="chain" id="PRO_1000070736" description="Urease subunit beta">
    <location>
        <begin position="1"/>
        <end position="101"/>
    </location>
</feature>
<proteinExistence type="inferred from homology"/>
<reference key="1">
    <citation type="journal article" date="2007" name="Genome Biol.">
        <title>Characterization and modeling of the Haemophilus influenzae core and supragenomes based on the complete genomic sequences of Rd and 12 clinical nontypeable strains.</title>
        <authorList>
            <person name="Hogg J.S."/>
            <person name="Hu F.Z."/>
            <person name="Janto B."/>
            <person name="Boissy R."/>
            <person name="Hayes J."/>
            <person name="Keefe R."/>
            <person name="Post J.C."/>
            <person name="Ehrlich G.D."/>
        </authorList>
    </citation>
    <scope>NUCLEOTIDE SEQUENCE [LARGE SCALE GENOMIC DNA]</scope>
    <source>
        <strain>PittEE</strain>
    </source>
</reference>
<accession>A5U9V5</accession>
<gene>
    <name evidence="1" type="primary">ureB</name>
    <name type="ordered locus">CGSHiEE_00290</name>
</gene>
<dbReference type="EC" id="3.5.1.5" evidence="1"/>
<dbReference type="EMBL" id="CP000671">
    <property type="protein sequence ID" value="ABQ97556.1"/>
    <property type="molecule type" value="Genomic_DNA"/>
</dbReference>
<dbReference type="SMR" id="A5U9V5"/>
<dbReference type="KEGG" id="hip:CGSHiEE_00290"/>
<dbReference type="HOGENOM" id="CLU_129707_1_1_6"/>
<dbReference type="UniPathway" id="UPA00258">
    <property type="reaction ID" value="UER00370"/>
</dbReference>
<dbReference type="GO" id="GO:0035550">
    <property type="term" value="C:urease complex"/>
    <property type="evidence" value="ECO:0007669"/>
    <property type="project" value="InterPro"/>
</dbReference>
<dbReference type="GO" id="GO:0009039">
    <property type="term" value="F:urease activity"/>
    <property type="evidence" value="ECO:0007669"/>
    <property type="project" value="UniProtKB-UniRule"/>
</dbReference>
<dbReference type="GO" id="GO:0043419">
    <property type="term" value="P:urea catabolic process"/>
    <property type="evidence" value="ECO:0007669"/>
    <property type="project" value="UniProtKB-UniRule"/>
</dbReference>
<dbReference type="CDD" id="cd00407">
    <property type="entry name" value="Urease_beta"/>
    <property type="match status" value="1"/>
</dbReference>
<dbReference type="FunFam" id="2.10.150.10:FF:000001">
    <property type="entry name" value="Urease subunit beta"/>
    <property type="match status" value="1"/>
</dbReference>
<dbReference type="Gene3D" id="2.10.150.10">
    <property type="entry name" value="Urease, beta subunit"/>
    <property type="match status" value="1"/>
</dbReference>
<dbReference type="HAMAP" id="MF_01954">
    <property type="entry name" value="Urease_beta"/>
    <property type="match status" value="1"/>
</dbReference>
<dbReference type="InterPro" id="IPR002019">
    <property type="entry name" value="Urease_beta-like"/>
</dbReference>
<dbReference type="InterPro" id="IPR036461">
    <property type="entry name" value="Urease_betasu_sf"/>
</dbReference>
<dbReference type="InterPro" id="IPR050069">
    <property type="entry name" value="Urease_subunit"/>
</dbReference>
<dbReference type="NCBIfam" id="NF009682">
    <property type="entry name" value="PRK13203.1"/>
    <property type="match status" value="1"/>
</dbReference>
<dbReference type="NCBIfam" id="TIGR00192">
    <property type="entry name" value="urease_beta"/>
    <property type="match status" value="1"/>
</dbReference>
<dbReference type="PANTHER" id="PTHR33569">
    <property type="entry name" value="UREASE"/>
    <property type="match status" value="1"/>
</dbReference>
<dbReference type="PANTHER" id="PTHR33569:SF1">
    <property type="entry name" value="UREASE"/>
    <property type="match status" value="1"/>
</dbReference>
<dbReference type="Pfam" id="PF00699">
    <property type="entry name" value="Urease_beta"/>
    <property type="match status" value="1"/>
</dbReference>
<dbReference type="SUPFAM" id="SSF51278">
    <property type="entry name" value="Urease, beta-subunit"/>
    <property type="match status" value="1"/>
</dbReference>